<reference key="1">
    <citation type="journal article" date="2008" name="PLoS Genet.">
        <title>Complete genome sequence of the complex carbohydrate-degrading marine bacterium, Saccharophagus degradans strain 2-40 T.</title>
        <authorList>
            <person name="Weiner R.M."/>
            <person name="Taylor L.E. II"/>
            <person name="Henrissat B."/>
            <person name="Hauser L."/>
            <person name="Land M."/>
            <person name="Coutinho P.M."/>
            <person name="Rancurel C."/>
            <person name="Saunders E.H."/>
            <person name="Longmire A.G."/>
            <person name="Zhang H."/>
            <person name="Bayer E.A."/>
            <person name="Gilbert H.J."/>
            <person name="Larimer F."/>
            <person name="Zhulin I.B."/>
            <person name="Ekborg N.A."/>
            <person name="Lamed R."/>
            <person name="Richardson P.M."/>
            <person name="Borovok I."/>
            <person name="Hutcheson S."/>
        </authorList>
    </citation>
    <scope>NUCLEOTIDE SEQUENCE [LARGE SCALE GENOMIC DNA]</scope>
    <source>
        <strain>2-40 / ATCC 43961 / DSM 17024</strain>
    </source>
</reference>
<keyword id="KW-0067">ATP-binding</keyword>
<keyword id="KW-0436">Ligase</keyword>
<keyword id="KW-0460">Magnesium</keyword>
<keyword id="KW-0464">Manganese</keyword>
<keyword id="KW-0479">Metal-binding</keyword>
<keyword id="KW-0547">Nucleotide-binding</keyword>
<keyword id="KW-0648">Protein biosynthesis</keyword>
<keyword id="KW-1185">Reference proteome</keyword>
<sequence length="301" mass="32578">MRIAVLSRNPNLYSTRRLKEAGEARGHTVDIIDTLHCYMDITMSRPAVRYHGEELPYYDAVIPRIGASITFYGTAVVRQFEMMGTFCVNESVAISRSRDKLRSLQLLSRKGVGLPRTGFANRPDKIKDLIKNVGGAPLVIKLLEGTQGIGVVLADTNKTAESILEAFMGLNANILVQEYIKEAGGADIRCFVVGNKVVAAMKRQGAEGEFRSNLHRGGSATLVRLSKEERATAVNAAKVMGLNVCGVDILQSNNGPVVMEVNSSPGLEGIENATNKDVAALVMEFIEANAKPNNTKTRGKG</sequence>
<protein>
    <recommendedName>
        <fullName evidence="1">Probable alpha-L-glutamate ligase</fullName>
        <ecNumber evidence="1">6.3.2.-</ecNumber>
    </recommendedName>
</protein>
<accession>Q21J37</accession>
<gene>
    <name evidence="1" type="primary">rimK</name>
    <name type="ordered locus">Sde_2032</name>
</gene>
<feature type="chain" id="PRO_1000068854" description="Probable alpha-L-glutamate ligase">
    <location>
        <begin position="1"/>
        <end position="301"/>
    </location>
</feature>
<feature type="domain" description="ATP-grasp" evidence="1">
    <location>
        <begin position="104"/>
        <end position="287"/>
    </location>
</feature>
<feature type="binding site" evidence="1">
    <location>
        <position position="141"/>
    </location>
    <ligand>
        <name>ATP</name>
        <dbReference type="ChEBI" id="CHEBI:30616"/>
    </ligand>
</feature>
<feature type="binding site" evidence="1">
    <location>
        <begin position="178"/>
        <end position="179"/>
    </location>
    <ligand>
        <name>ATP</name>
        <dbReference type="ChEBI" id="CHEBI:30616"/>
    </ligand>
</feature>
<feature type="binding site" evidence="1">
    <location>
        <position position="187"/>
    </location>
    <ligand>
        <name>ATP</name>
        <dbReference type="ChEBI" id="CHEBI:30616"/>
    </ligand>
</feature>
<feature type="binding site" evidence="1">
    <location>
        <begin position="211"/>
        <end position="213"/>
    </location>
    <ligand>
        <name>ATP</name>
        <dbReference type="ChEBI" id="CHEBI:30616"/>
    </ligand>
</feature>
<feature type="binding site" evidence="1">
    <location>
        <position position="248"/>
    </location>
    <ligand>
        <name>Mg(2+)</name>
        <dbReference type="ChEBI" id="CHEBI:18420"/>
        <label>1</label>
    </ligand>
</feature>
<feature type="binding site" evidence="1">
    <location>
        <position position="248"/>
    </location>
    <ligand>
        <name>Mn(2+)</name>
        <dbReference type="ChEBI" id="CHEBI:29035"/>
        <label>1</label>
    </ligand>
</feature>
<feature type="binding site" evidence="1">
    <location>
        <position position="260"/>
    </location>
    <ligand>
        <name>Mg(2+)</name>
        <dbReference type="ChEBI" id="CHEBI:18420"/>
        <label>1</label>
    </ligand>
</feature>
<feature type="binding site" evidence="1">
    <location>
        <position position="260"/>
    </location>
    <ligand>
        <name>Mg(2+)</name>
        <dbReference type="ChEBI" id="CHEBI:18420"/>
        <label>2</label>
    </ligand>
</feature>
<feature type="binding site" evidence="1">
    <location>
        <position position="260"/>
    </location>
    <ligand>
        <name>Mn(2+)</name>
        <dbReference type="ChEBI" id="CHEBI:29035"/>
        <label>1</label>
    </ligand>
</feature>
<feature type="binding site" evidence="1">
    <location>
        <position position="260"/>
    </location>
    <ligand>
        <name>Mn(2+)</name>
        <dbReference type="ChEBI" id="CHEBI:29035"/>
        <label>2</label>
    </ligand>
</feature>
<feature type="binding site" evidence="1">
    <location>
        <position position="262"/>
    </location>
    <ligand>
        <name>Mg(2+)</name>
        <dbReference type="ChEBI" id="CHEBI:18420"/>
        <label>2</label>
    </ligand>
</feature>
<feature type="binding site" evidence="1">
    <location>
        <position position="262"/>
    </location>
    <ligand>
        <name>Mn(2+)</name>
        <dbReference type="ChEBI" id="CHEBI:29035"/>
        <label>2</label>
    </ligand>
</feature>
<name>RIMK_SACD2</name>
<dbReference type="EC" id="6.3.2.-" evidence="1"/>
<dbReference type="EMBL" id="CP000282">
    <property type="protein sequence ID" value="ABD81292.1"/>
    <property type="molecule type" value="Genomic_DNA"/>
</dbReference>
<dbReference type="RefSeq" id="WP_011468510.1">
    <property type="nucleotide sequence ID" value="NC_007912.1"/>
</dbReference>
<dbReference type="SMR" id="Q21J37"/>
<dbReference type="STRING" id="203122.Sde_2032"/>
<dbReference type="GeneID" id="98613704"/>
<dbReference type="KEGG" id="sde:Sde_2032"/>
<dbReference type="eggNOG" id="COG0189">
    <property type="taxonomic scope" value="Bacteria"/>
</dbReference>
<dbReference type="HOGENOM" id="CLU_054353_0_1_6"/>
<dbReference type="OrthoDB" id="3865600at2"/>
<dbReference type="Proteomes" id="UP000001947">
    <property type="component" value="Chromosome"/>
</dbReference>
<dbReference type="GO" id="GO:0005737">
    <property type="term" value="C:cytoplasm"/>
    <property type="evidence" value="ECO:0007669"/>
    <property type="project" value="TreeGrafter"/>
</dbReference>
<dbReference type="GO" id="GO:0005524">
    <property type="term" value="F:ATP binding"/>
    <property type="evidence" value="ECO:0007669"/>
    <property type="project" value="UniProtKB-UniRule"/>
</dbReference>
<dbReference type="GO" id="GO:0046872">
    <property type="term" value="F:metal ion binding"/>
    <property type="evidence" value="ECO:0007669"/>
    <property type="project" value="UniProtKB-KW"/>
</dbReference>
<dbReference type="GO" id="GO:0018169">
    <property type="term" value="F:ribosomal S6-glutamic acid ligase activity"/>
    <property type="evidence" value="ECO:0007669"/>
    <property type="project" value="TreeGrafter"/>
</dbReference>
<dbReference type="GO" id="GO:0036211">
    <property type="term" value="P:protein modification process"/>
    <property type="evidence" value="ECO:0007669"/>
    <property type="project" value="InterPro"/>
</dbReference>
<dbReference type="GO" id="GO:0009432">
    <property type="term" value="P:SOS response"/>
    <property type="evidence" value="ECO:0007669"/>
    <property type="project" value="TreeGrafter"/>
</dbReference>
<dbReference type="GO" id="GO:0006412">
    <property type="term" value="P:translation"/>
    <property type="evidence" value="ECO:0007669"/>
    <property type="project" value="UniProtKB-KW"/>
</dbReference>
<dbReference type="FunFam" id="3.40.50.20:FF:000004">
    <property type="entry name" value="Probable alpha-L-glutamate ligase"/>
    <property type="match status" value="1"/>
</dbReference>
<dbReference type="FunFam" id="3.30.1490.20:FF:000005">
    <property type="entry name" value="Probable alpha-L-glutamate ligase 1"/>
    <property type="match status" value="1"/>
</dbReference>
<dbReference type="Gene3D" id="3.40.50.20">
    <property type="match status" value="1"/>
</dbReference>
<dbReference type="Gene3D" id="3.30.1490.20">
    <property type="entry name" value="ATP-grasp fold, A domain"/>
    <property type="match status" value="1"/>
</dbReference>
<dbReference type="Gene3D" id="3.30.470.20">
    <property type="entry name" value="ATP-grasp fold, B domain"/>
    <property type="match status" value="1"/>
</dbReference>
<dbReference type="HAMAP" id="MF_01552">
    <property type="entry name" value="RimK"/>
    <property type="match status" value="1"/>
</dbReference>
<dbReference type="InterPro" id="IPR011761">
    <property type="entry name" value="ATP-grasp"/>
</dbReference>
<dbReference type="InterPro" id="IPR013651">
    <property type="entry name" value="ATP-grasp_RimK-type"/>
</dbReference>
<dbReference type="InterPro" id="IPR013815">
    <property type="entry name" value="ATP_grasp_subdomain_1"/>
</dbReference>
<dbReference type="InterPro" id="IPR023533">
    <property type="entry name" value="RimK"/>
</dbReference>
<dbReference type="InterPro" id="IPR041107">
    <property type="entry name" value="Rimk_N"/>
</dbReference>
<dbReference type="InterPro" id="IPR004666">
    <property type="entry name" value="Rp_bS6_RimK/Lys_biosynth_LsyX"/>
</dbReference>
<dbReference type="NCBIfam" id="NF007764">
    <property type="entry name" value="PRK10446.1"/>
    <property type="match status" value="1"/>
</dbReference>
<dbReference type="NCBIfam" id="TIGR00768">
    <property type="entry name" value="rimK_fam"/>
    <property type="match status" value="1"/>
</dbReference>
<dbReference type="PANTHER" id="PTHR21621:SF7">
    <property type="entry name" value="RIBOSOMAL PROTEIN BS6--L-GLUTAMATE LIGASE"/>
    <property type="match status" value="1"/>
</dbReference>
<dbReference type="PANTHER" id="PTHR21621">
    <property type="entry name" value="RIBOSOMAL PROTEIN S6 MODIFICATION PROTEIN"/>
    <property type="match status" value="1"/>
</dbReference>
<dbReference type="Pfam" id="PF08443">
    <property type="entry name" value="RimK"/>
    <property type="match status" value="1"/>
</dbReference>
<dbReference type="Pfam" id="PF18030">
    <property type="entry name" value="Rimk_N"/>
    <property type="match status" value="1"/>
</dbReference>
<dbReference type="SUPFAM" id="SSF56059">
    <property type="entry name" value="Glutathione synthetase ATP-binding domain-like"/>
    <property type="match status" value="1"/>
</dbReference>
<dbReference type="PROSITE" id="PS50975">
    <property type="entry name" value="ATP_GRASP"/>
    <property type="match status" value="1"/>
</dbReference>
<organism>
    <name type="scientific">Saccharophagus degradans (strain 2-40 / ATCC 43961 / DSM 17024)</name>
    <dbReference type="NCBI Taxonomy" id="203122"/>
    <lineage>
        <taxon>Bacteria</taxon>
        <taxon>Pseudomonadati</taxon>
        <taxon>Pseudomonadota</taxon>
        <taxon>Gammaproteobacteria</taxon>
        <taxon>Cellvibrionales</taxon>
        <taxon>Cellvibrionaceae</taxon>
        <taxon>Saccharophagus</taxon>
    </lineage>
</organism>
<comment type="cofactor">
    <cofactor evidence="1">
        <name>Mg(2+)</name>
        <dbReference type="ChEBI" id="CHEBI:18420"/>
    </cofactor>
    <cofactor evidence="1">
        <name>Mn(2+)</name>
        <dbReference type="ChEBI" id="CHEBI:29035"/>
    </cofactor>
    <text evidence="1">Binds 2 magnesium or manganese ions per subunit.</text>
</comment>
<comment type="similarity">
    <text evidence="1">Belongs to the RimK family.</text>
</comment>
<proteinExistence type="inferred from homology"/>
<evidence type="ECO:0000255" key="1">
    <source>
        <dbReference type="HAMAP-Rule" id="MF_01552"/>
    </source>
</evidence>